<protein>
    <recommendedName>
        <fullName>Gamma-sarcoglycan</fullName>
        <shortName>Gamma-SG</shortName>
    </recommendedName>
</protein>
<comment type="function">
    <text evidence="1">Component of the sarcoglycan complex, a subcomplex of the dystrophin-glycoprotein complex which forms a link between the F-actin cytoskeleton and the extracellular matrix.</text>
</comment>
<comment type="subunit">
    <text evidence="1">Interacts with the syntrophin SNTA1. Cross-link to form 2 major subcomplexes: one consisting of SGCB, SGCD and SGCG and the other consisting of SGCB and SGCD. The association between SGCB and SGCG is particularly strong while SGCA is loosely associated with the other sarcoglycans. Interacts with FLNC (By similarity).</text>
</comment>
<comment type="subcellular location">
    <subcellularLocation>
        <location evidence="1">Cell membrane</location>
        <location evidence="1">Sarcolemma</location>
        <topology evidence="1">Single-pass type II membrane protein</topology>
    </subcellularLocation>
    <subcellularLocation>
        <location evidence="1">Cytoplasm</location>
        <location evidence="1">Cytoskeleton</location>
    </subcellularLocation>
</comment>
<comment type="PTM">
    <text evidence="1">Disulfide bonds are present.</text>
</comment>
<comment type="similarity">
    <text evidence="3">Belongs to the sarcoglycan beta/delta/gamma/zeta family.</text>
</comment>
<name>SGCG_CANLF</name>
<dbReference type="EMBL" id="AJ306895">
    <property type="protein sequence ID" value="CAC88127.1"/>
    <property type="molecule type" value="Genomic_DNA"/>
</dbReference>
<dbReference type="EMBL" id="AJ306896">
    <property type="protein sequence ID" value="CAC88127.1"/>
    <property type="status" value="JOINED"/>
    <property type="molecule type" value="Genomic_DNA"/>
</dbReference>
<dbReference type="EMBL" id="AJ306897">
    <property type="protein sequence ID" value="CAC88127.1"/>
    <property type="status" value="JOINED"/>
    <property type="molecule type" value="Genomic_DNA"/>
</dbReference>
<dbReference type="EMBL" id="AJ306898">
    <property type="protein sequence ID" value="CAC88127.1"/>
    <property type="status" value="JOINED"/>
    <property type="molecule type" value="Genomic_DNA"/>
</dbReference>
<dbReference type="EMBL" id="AJ306899">
    <property type="protein sequence ID" value="CAC88127.1"/>
    <property type="status" value="JOINED"/>
    <property type="molecule type" value="Genomic_DNA"/>
</dbReference>
<dbReference type="EMBL" id="AJ306900">
    <property type="protein sequence ID" value="CAC88127.1"/>
    <property type="status" value="JOINED"/>
    <property type="molecule type" value="Genomic_DNA"/>
</dbReference>
<dbReference type="RefSeq" id="NP_001014298.1">
    <property type="nucleotide sequence ID" value="NM_001014276.2"/>
</dbReference>
<dbReference type="RefSeq" id="XP_005635441.1">
    <property type="nucleotide sequence ID" value="XM_005635384.2"/>
</dbReference>
<dbReference type="RefSeq" id="XP_038290492.1">
    <property type="nucleotide sequence ID" value="XM_038434564.1"/>
</dbReference>
<dbReference type="RefSeq" id="XP_038290493.1">
    <property type="nucleotide sequence ID" value="XM_038434565.1"/>
</dbReference>
<dbReference type="SMR" id="Q8SQ72"/>
<dbReference type="FunCoup" id="Q8SQ72">
    <property type="interactions" value="18"/>
</dbReference>
<dbReference type="STRING" id="9615.ENSCAFP00000010630"/>
<dbReference type="GlyCosmos" id="Q8SQ72">
    <property type="glycosylation" value="1 site, No reported glycans"/>
</dbReference>
<dbReference type="SwissPalm" id="Q8SQ72"/>
<dbReference type="PaxDb" id="9612-ENSCAFP00000010630"/>
<dbReference type="Ensembl" id="ENSCAFT00030019974.1">
    <property type="protein sequence ID" value="ENSCAFP00030017408.1"/>
    <property type="gene ID" value="ENSCAFG00030010748.1"/>
</dbReference>
<dbReference type="Ensembl" id="ENSCAFT00040043720.1">
    <property type="protein sequence ID" value="ENSCAFP00040038148.1"/>
    <property type="gene ID" value="ENSCAFG00040023502.1"/>
</dbReference>
<dbReference type="GeneID" id="486043"/>
<dbReference type="KEGG" id="cfa:486043"/>
<dbReference type="CTD" id="6445"/>
<dbReference type="eggNOG" id="KOG3950">
    <property type="taxonomic scope" value="Eukaryota"/>
</dbReference>
<dbReference type="HOGENOM" id="CLU_043450_0_0_1"/>
<dbReference type="InParanoid" id="Q8SQ72"/>
<dbReference type="OMA" id="VMWFSPV"/>
<dbReference type="OrthoDB" id="8881719at2759"/>
<dbReference type="TreeFam" id="TF313538"/>
<dbReference type="Reactome" id="R-CFA-9913351">
    <property type="pathway name" value="Formation of the dystrophin-glycoprotein complex (DGC)"/>
</dbReference>
<dbReference type="Proteomes" id="UP000002254">
    <property type="component" value="Unplaced"/>
</dbReference>
<dbReference type="Proteomes" id="UP000694429">
    <property type="component" value="Chromosome 25"/>
</dbReference>
<dbReference type="Proteomes" id="UP000694542">
    <property type="component" value="Chromosome 25"/>
</dbReference>
<dbReference type="Proteomes" id="UP000805418">
    <property type="component" value="Unplaced"/>
</dbReference>
<dbReference type="GO" id="GO:0005737">
    <property type="term" value="C:cytoplasm"/>
    <property type="evidence" value="ECO:0007669"/>
    <property type="project" value="UniProtKB-KW"/>
</dbReference>
<dbReference type="GO" id="GO:0005856">
    <property type="term" value="C:cytoskeleton"/>
    <property type="evidence" value="ECO:0007669"/>
    <property type="project" value="UniProtKB-SubCell"/>
</dbReference>
<dbReference type="GO" id="GO:0016012">
    <property type="term" value="C:sarcoglycan complex"/>
    <property type="evidence" value="ECO:0000318"/>
    <property type="project" value="GO_Central"/>
</dbReference>
<dbReference type="GO" id="GO:0042383">
    <property type="term" value="C:sarcolemma"/>
    <property type="evidence" value="ECO:0000318"/>
    <property type="project" value="GO_Central"/>
</dbReference>
<dbReference type="GO" id="GO:0048738">
    <property type="term" value="P:cardiac muscle tissue development"/>
    <property type="evidence" value="ECO:0000318"/>
    <property type="project" value="GO_Central"/>
</dbReference>
<dbReference type="GO" id="GO:0060047">
    <property type="term" value="P:heart contraction"/>
    <property type="evidence" value="ECO:0000318"/>
    <property type="project" value="GO_Central"/>
</dbReference>
<dbReference type="InterPro" id="IPR006875">
    <property type="entry name" value="Sarcoglycan"/>
</dbReference>
<dbReference type="InterPro" id="IPR039972">
    <property type="entry name" value="Sarcoglycan_gamma/delta/zeta"/>
</dbReference>
<dbReference type="PANTHER" id="PTHR12939:SF4">
    <property type="entry name" value="GAMMA-SARCOGLYCAN"/>
    <property type="match status" value="1"/>
</dbReference>
<dbReference type="PANTHER" id="PTHR12939">
    <property type="entry name" value="SARCOGLYCAN"/>
    <property type="match status" value="1"/>
</dbReference>
<dbReference type="Pfam" id="PF04790">
    <property type="entry name" value="Sarcoglycan_1"/>
    <property type="match status" value="1"/>
</dbReference>
<sequence length="291" mass="32398">MVREQYTTTTEGTHIQRPENQCVYKIGIYGWRKRCLYLFVLLLLIILLVNFALTIWILKVMWFSPTGMGHLRVTKDGLRLEGESEFLFPLYAKEIHSRVDSSLLLQSTQNVTVNARNSEGEVTGRLKVGPKMVEVQSQQFQINSKDGKPLFTVDEKEVVVGTDKLRVTGPEGALFEHSVETPLVRADPFQDLRLESPTRSLSMDAPKGVHIKAHAGKIEALSQMDIIFQSSDGMLVLDAETVCLPKLVQGTQGPAGSSQRLYEICVCPDGKLYLSVAGVGTTCHEHSHICL</sequence>
<keyword id="KW-1003">Cell membrane</keyword>
<keyword id="KW-0963">Cytoplasm</keyword>
<keyword id="KW-0206">Cytoskeleton</keyword>
<keyword id="KW-1015">Disulfide bond</keyword>
<keyword id="KW-0325">Glycoprotein</keyword>
<keyword id="KW-0472">Membrane</keyword>
<keyword id="KW-1185">Reference proteome</keyword>
<keyword id="KW-0735">Signal-anchor</keyword>
<keyword id="KW-0812">Transmembrane</keyword>
<keyword id="KW-1133">Transmembrane helix</keyword>
<feature type="chain" id="PRO_0000289584" description="Gamma-sarcoglycan">
    <location>
        <begin position="1"/>
        <end position="291"/>
    </location>
</feature>
<feature type="transmembrane region" description="Helical; Signal-anchor for type II membrane protein" evidence="2">
    <location>
        <begin position="38"/>
        <end position="58"/>
    </location>
</feature>
<feature type="topological domain" description="Extracellular" evidence="2">
    <location>
        <begin position="59"/>
        <end position="291"/>
    </location>
</feature>
<feature type="glycosylation site" description="N-linked (GlcNAc...) asparagine" evidence="2">
    <location>
        <position position="110"/>
    </location>
</feature>
<feature type="disulfide bond" evidence="2">
    <location>
        <begin position="265"/>
        <end position="290"/>
    </location>
</feature>
<feature type="disulfide bond" evidence="2">
    <location>
        <begin position="267"/>
        <end position="283"/>
    </location>
</feature>
<gene>
    <name type="primary">SGCG</name>
</gene>
<accession>Q8SQ72</accession>
<proteinExistence type="inferred from homology"/>
<reference key="1">
    <citation type="journal article" date="2001" name="Cytogenet. Cell Genet.">
        <title>Characterization and chromosome assignment of the canine gamma-sarcoglycan gene (SGCG) to CFA 25q21--&gt;q23.</title>
        <authorList>
            <person name="Conrad K."/>
            <person name="Deppe A."/>
            <person name="Neumann S."/>
            <person name="Breen M."/>
            <person name="Quignon P."/>
            <person name="Andre C."/>
            <person name="Brenig B."/>
            <person name="Leeb T."/>
        </authorList>
    </citation>
    <scope>NUCLEOTIDE SEQUENCE [GENOMIC DNA]</scope>
</reference>
<organism>
    <name type="scientific">Canis lupus familiaris</name>
    <name type="common">Dog</name>
    <name type="synonym">Canis familiaris</name>
    <dbReference type="NCBI Taxonomy" id="9615"/>
    <lineage>
        <taxon>Eukaryota</taxon>
        <taxon>Metazoa</taxon>
        <taxon>Chordata</taxon>
        <taxon>Craniata</taxon>
        <taxon>Vertebrata</taxon>
        <taxon>Euteleostomi</taxon>
        <taxon>Mammalia</taxon>
        <taxon>Eutheria</taxon>
        <taxon>Laurasiatheria</taxon>
        <taxon>Carnivora</taxon>
        <taxon>Caniformia</taxon>
        <taxon>Canidae</taxon>
        <taxon>Canis</taxon>
    </lineage>
</organism>
<evidence type="ECO:0000250" key="1"/>
<evidence type="ECO:0000255" key="2"/>
<evidence type="ECO:0000305" key="3"/>